<sequence>MNRIALGLHYDGAAFSGWQSQPHRNTVQDHLEDAIERFAGVRLLTTVAGRTDAGVHALGQVIHLDTELVREPFSWVRGVNAFLPPSIALQWALPVDVGFHARFLAYERMYYYALYTGPHRVPMVHGRAGYQMLPPGQRLDVEAMRAAAAHLIGEHDFSAFRAAECQAKSPVKTMYDVTIRDDGNWVFLRFRASAFLHHMVRNLMGCLVAVGRRRYPPDWMAQVLAGRDRKLAAPTFMPDGLYLVGVKYPDAYPIPAADPSASLFHGVFDDAA</sequence>
<proteinExistence type="inferred from homology"/>
<organism>
    <name type="scientific">Cupriavidus taiwanensis (strain DSM 17343 / BCRC 17206 / CCUG 44338 / CIP 107171 / LMG 19424 / R1)</name>
    <name type="common">Ralstonia taiwanensis (strain LMG 19424)</name>
    <dbReference type="NCBI Taxonomy" id="977880"/>
    <lineage>
        <taxon>Bacteria</taxon>
        <taxon>Pseudomonadati</taxon>
        <taxon>Pseudomonadota</taxon>
        <taxon>Betaproteobacteria</taxon>
        <taxon>Burkholderiales</taxon>
        <taxon>Burkholderiaceae</taxon>
        <taxon>Cupriavidus</taxon>
    </lineage>
</organism>
<evidence type="ECO:0000255" key="1">
    <source>
        <dbReference type="HAMAP-Rule" id="MF_00171"/>
    </source>
</evidence>
<protein>
    <recommendedName>
        <fullName evidence="1">tRNA pseudouridine synthase A</fullName>
        <ecNumber evidence="1">5.4.99.12</ecNumber>
    </recommendedName>
    <alternativeName>
        <fullName evidence="1">tRNA pseudouridine(38-40) synthase</fullName>
    </alternativeName>
    <alternativeName>
        <fullName evidence="1">tRNA pseudouridylate synthase I</fullName>
    </alternativeName>
    <alternativeName>
        <fullName evidence="1">tRNA-uridine isomerase I</fullName>
    </alternativeName>
</protein>
<gene>
    <name evidence="1" type="primary">truA</name>
    <name type="ordered locus">RALTA_A2114</name>
</gene>
<name>TRUA_CUPTR</name>
<feature type="chain" id="PRO_1000097735" description="tRNA pseudouridine synthase A">
    <location>
        <begin position="1"/>
        <end position="272"/>
    </location>
</feature>
<feature type="active site" description="Nucleophile" evidence="1">
    <location>
        <position position="52"/>
    </location>
</feature>
<feature type="binding site" evidence="1">
    <location>
        <position position="110"/>
    </location>
    <ligand>
        <name>substrate</name>
    </ligand>
</feature>
<comment type="function">
    <text evidence="1">Formation of pseudouridine at positions 38, 39 and 40 in the anticodon stem and loop of transfer RNAs.</text>
</comment>
<comment type="catalytic activity">
    <reaction evidence="1">
        <text>uridine(38/39/40) in tRNA = pseudouridine(38/39/40) in tRNA</text>
        <dbReference type="Rhea" id="RHEA:22376"/>
        <dbReference type="Rhea" id="RHEA-COMP:10085"/>
        <dbReference type="Rhea" id="RHEA-COMP:10087"/>
        <dbReference type="ChEBI" id="CHEBI:65314"/>
        <dbReference type="ChEBI" id="CHEBI:65315"/>
        <dbReference type="EC" id="5.4.99.12"/>
    </reaction>
</comment>
<comment type="subunit">
    <text evidence="1">Homodimer.</text>
</comment>
<comment type="similarity">
    <text evidence="1">Belongs to the tRNA pseudouridine synthase TruA family.</text>
</comment>
<keyword id="KW-0413">Isomerase</keyword>
<keyword id="KW-0819">tRNA processing</keyword>
<accession>B3R117</accession>
<dbReference type="EC" id="5.4.99.12" evidence="1"/>
<dbReference type="EMBL" id="CU633749">
    <property type="protein sequence ID" value="CAQ70051.1"/>
    <property type="molecule type" value="Genomic_DNA"/>
</dbReference>
<dbReference type="RefSeq" id="WP_012353357.1">
    <property type="nucleotide sequence ID" value="NC_010528.1"/>
</dbReference>
<dbReference type="SMR" id="B3R117"/>
<dbReference type="GeneID" id="29762865"/>
<dbReference type="KEGG" id="cti:RALTA_A2114"/>
<dbReference type="eggNOG" id="COG0101">
    <property type="taxonomic scope" value="Bacteria"/>
</dbReference>
<dbReference type="HOGENOM" id="CLU_014673_0_2_4"/>
<dbReference type="BioCyc" id="CTAI977880:RALTA_RS10265-MONOMER"/>
<dbReference type="Proteomes" id="UP000001692">
    <property type="component" value="Chromosome 1"/>
</dbReference>
<dbReference type="GO" id="GO:0003723">
    <property type="term" value="F:RNA binding"/>
    <property type="evidence" value="ECO:0007669"/>
    <property type="project" value="InterPro"/>
</dbReference>
<dbReference type="GO" id="GO:0160147">
    <property type="term" value="F:tRNA pseudouridine(38-40) synthase activity"/>
    <property type="evidence" value="ECO:0007669"/>
    <property type="project" value="UniProtKB-EC"/>
</dbReference>
<dbReference type="GO" id="GO:0031119">
    <property type="term" value="P:tRNA pseudouridine synthesis"/>
    <property type="evidence" value="ECO:0007669"/>
    <property type="project" value="UniProtKB-UniRule"/>
</dbReference>
<dbReference type="CDD" id="cd02570">
    <property type="entry name" value="PseudoU_synth_EcTruA"/>
    <property type="match status" value="1"/>
</dbReference>
<dbReference type="FunFam" id="3.30.70.580:FF:000001">
    <property type="entry name" value="tRNA pseudouridine synthase A"/>
    <property type="match status" value="1"/>
</dbReference>
<dbReference type="Gene3D" id="3.30.70.660">
    <property type="entry name" value="Pseudouridine synthase I, catalytic domain, C-terminal subdomain"/>
    <property type="match status" value="1"/>
</dbReference>
<dbReference type="Gene3D" id="3.30.70.580">
    <property type="entry name" value="Pseudouridine synthase I, catalytic domain, N-terminal subdomain"/>
    <property type="match status" value="1"/>
</dbReference>
<dbReference type="HAMAP" id="MF_00171">
    <property type="entry name" value="TruA"/>
    <property type="match status" value="1"/>
</dbReference>
<dbReference type="InterPro" id="IPR020103">
    <property type="entry name" value="PsdUridine_synth_cat_dom_sf"/>
</dbReference>
<dbReference type="InterPro" id="IPR001406">
    <property type="entry name" value="PsdUridine_synth_TruA"/>
</dbReference>
<dbReference type="InterPro" id="IPR020097">
    <property type="entry name" value="PsdUridine_synth_TruA_a/b_dom"/>
</dbReference>
<dbReference type="InterPro" id="IPR020095">
    <property type="entry name" value="PsdUridine_synth_TruA_C"/>
</dbReference>
<dbReference type="InterPro" id="IPR020094">
    <property type="entry name" value="TruA/RsuA/RluB/E/F_N"/>
</dbReference>
<dbReference type="NCBIfam" id="TIGR00071">
    <property type="entry name" value="hisT_truA"/>
    <property type="match status" value="1"/>
</dbReference>
<dbReference type="PANTHER" id="PTHR11142">
    <property type="entry name" value="PSEUDOURIDYLATE SYNTHASE"/>
    <property type="match status" value="1"/>
</dbReference>
<dbReference type="PANTHER" id="PTHR11142:SF0">
    <property type="entry name" value="TRNA PSEUDOURIDINE SYNTHASE-LIKE 1"/>
    <property type="match status" value="1"/>
</dbReference>
<dbReference type="Pfam" id="PF01416">
    <property type="entry name" value="PseudoU_synth_1"/>
    <property type="match status" value="2"/>
</dbReference>
<dbReference type="PIRSF" id="PIRSF001430">
    <property type="entry name" value="tRNA_psdUrid_synth"/>
    <property type="match status" value="1"/>
</dbReference>
<dbReference type="SUPFAM" id="SSF55120">
    <property type="entry name" value="Pseudouridine synthase"/>
    <property type="match status" value="1"/>
</dbReference>
<reference key="1">
    <citation type="journal article" date="2008" name="Genome Res.">
        <title>Genome sequence of the beta-rhizobium Cupriavidus taiwanensis and comparative genomics of rhizobia.</title>
        <authorList>
            <person name="Amadou C."/>
            <person name="Pascal G."/>
            <person name="Mangenot S."/>
            <person name="Glew M."/>
            <person name="Bontemps C."/>
            <person name="Capela D."/>
            <person name="Carrere S."/>
            <person name="Cruveiller S."/>
            <person name="Dossat C."/>
            <person name="Lajus A."/>
            <person name="Marchetti M."/>
            <person name="Poinsot V."/>
            <person name="Rouy Z."/>
            <person name="Servin B."/>
            <person name="Saad M."/>
            <person name="Schenowitz C."/>
            <person name="Barbe V."/>
            <person name="Batut J."/>
            <person name="Medigue C."/>
            <person name="Masson-Boivin C."/>
        </authorList>
    </citation>
    <scope>NUCLEOTIDE SEQUENCE [LARGE SCALE GENOMIC DNA]</scope>
    <source>
        <strain>DSM 17343 / BCRC 17206 / CCUG 44338 / CIP 107171 / LMG 19424 / R1</strain>
    </source>
</reference>